<dbReference type="EMBL" id="CP000377">
    <property type="protein sequence ID" value="ABF63976.1"/>
    <property type="molecule type" value="Genomic_DNA"/>
</dbReference>
<dbReference type="RefSeq" id="WP_011538582.1">
    <property type="nucleotide sequence ID" value="NC_008044.1"/>
</dbReference>
<dbReference type="SMR" id="Q1GH90"/>
<dbReference type="STRING" id="292414.TM1040_1243"/>
<dbReference type="KEGG" id="sit:TM1040_1243"/>
<dbReference type="eggNOG" id="COG0393">
    <property type="taxonomic scope" value="Bacteria"/>
</dbReference>
<dbReference type="HOGENOM" id="CLU_117144_3_2_5"/>
<dbReference type="OrthoDB" id="9796448at2"/>
<dbReference type="Proteomes" id="UP000000636">
    <property type="component" value="Chromosome"/>
</dbReference>
<dbReference type="Gene3D" id="3.30.110.70">
    <property type="entry name" value="Hypothetical protein apc22750. Chain B"/>
    <property type="match status" value="1"/>
</dbReference>
<dbReference type="HAMAP" id="MF_00338">
    <property type="entry name" value="UPF0145"/>
    <property type="match status" value="1"/>
</dbReference>
<dbReference type="InterPro" id="IPR035439">
    <property type="entry name" value="UPF0145_dom_sf"/>
</dbReference>
<dbReference type="InterPro" id="IPR002765">
    <property type="entry name" value="UPF0145_YbjQ-like"/>
</dbReference>
<dbReference type="PANTHER" id="PTHR34068">
    <property type="entry name" value="UPF0145 PROTEIN YBJQ"/>
    <property type="match status" value="1"/>
</dbReference>
<dbReference type="PANTHER" id="PTHR34068:SF1">
    <property type="entry name" value="UPF0145 PROTEIN YBJQ"/>
    <property type="match status" value="1"/>
</dbReference>
<dbReference type="Pfam" id="PF01906">
    <property type="entry name" value="YbjQ_1"/>
    <property type="match status" value="1"/>
</dbReference>
<dbReference type="SUPFAM" id="SSF117782">
    <property type="entry name" value="YbjQ-like"/>
    <property type="match status" value="1"/>
</dbReference>
<keyword id="KW-1185">Reference proteome</keyword>
<name>Y1243_RUEST</name>
<gene>
    <name type="ordered locus">TM1040_1243</name>
</gene>
<proteinExistence type="inferred from homology"/>
<feature type="chain" id="PRO_1000013029" description="UPF0145 protein TM1040_1243">
    <location>
        <begin position="1"/>
        <end position="104"/>
    </location>
</feature>
<reference key="1">
    <citation type="submission" date="2006-05" db="EMBL/GenBank/DDBJ databases">
        <title>Complete sequence of chromosome of Silicibacter sp. TM1040.</title>
        <authorList>
            <consortium name="US DOE Joint Genome Institute"/>
            <person name="Copeland A."/>
            <person name="Lucas S."/>
            <person name="Lapidus A."/>
            <person name="Barry K."/>
            <person name="Detter J.C."/>
            <person name="Glavina del Rio T."/>
            <person name="Hammon N."/>
            <person name="Israni S."/>
            <person name="Dalin E."/>
            <person name="Tice H."/>
            <person name="Pitluck S."/>
            <person name="Brettin T."/>
            <person name="Bruce D."/>
            <person name="Han C."/>
            <person name="Tapia R."/>
            <person name="Goodwin L."/>
            <person name="Thompson L.S."/>
            <person name="Gilna P."/>
            <person name="Schmutz J."/>
            <person name="Larimer F."/>
            <person name="Land M."/>
            <person name="Hauser L."/>
            <person name="Kyrpides N."/>
            <person name="Kim E."/>
            <person name="Belas R."/>
            <person name="Moran M.A."/>
            <person name="Buchan A."/>
            <person name="Gonzalez J.M."/>
            <person name="Schell M.A."/>
            <person name="Sun F."/>
            <person name="Richardson P."/>
        </authorList>
    </citation>
    <scope>NUCLEOTIDE SEQUENCE [LARGE SCALE GENOMIC DNA]</scope>
    <source>
        <strain>TM1040</strain>
    </source>
</reference>
<protein>
    <recommendedName>
        <fullName evidence="1">UPF0145 protein TM1040_1243</fullName>
    </recommendedName>
</protein>
<sequence length="104" mass="10856">MIVTTTNSVEGYQISEYKGIVVGEAIMGANVVRDVFAQITDIVGGRSGAYESKLQDARETALSELEDRARALGANAVVGVDLDYEVVGQSMLMVSASGTAVVIG</sequence>
<evidence type="ECO:0000255" key="1">
    <source>
        <dbReference type="HAMAP-Rule" id="MF_00338"/>
    </source>
</evidence>
<comment type="similarity">
    <text evidence="1">Belongs to the UPF0145 family.</text>
</comment>
<organism>
    <name type="scientific">Ruegeria sp. (strain TM1040)</name>
    <name type="common">Silicibacter sp.</name>
    <dbReference type="NCBI Taxonomy" id="292414"/>
    <lineage>
        <taxon>Bacteria</taxon>
        <taxon>Pseudomonadati</taxon>
        <taxon>Pseudomonadota</taxon>
        <taxon>Alphaproteobacteria</taxon>
        <taxon>Rhodobacterales</taxon>
        <taxon>Roseobacteraceae</taxon>
        <taxon>Ruegeria</taxon>
    </lineage>
</organism>
<accession>Q1GH90</accession>